<accession>P76055</accession>
<accession>Q2MBE9</accession>
<accession>Q47558</accession>
<comment type="function">
    <text evidence="2 4 7">Catalyzes the ATP-dependent 2-thiolation of cytidine in position 32 of tRNA, to form 2-thiocytidine (s(2)C32). The sulfur atoms are provided by the cysteine/cysteine desulfurase (IscS) system.</text>
</comment>
<comment type="catalytic activity">
    <reaction evidence="2 4 7">
        <text>cytidine(32) in tRNA + S-sulfanyl-L-cysteinyl-[cysteine desulfurase] + AH2 + ATP = 2-thiocytidine(32) in tRNA + L-cysteinyl-[cysteine desulfurase] + A + AMP + diphosphate + H(+)</text>
        <dbReference type="Rhea" id="RHEA:57048"/>
        <dbReference type="Rhea" id="RHEA-COMP:10288"/>
        <dbReference type="Rhea" id="RHEA-COMP:12157"/>
        <dbReference type="Rhea" id="RHEA-COMP:12158"/>
        <dbReference type="Rhea" id="RHEA-COMP:14821"/>
        <dbReference type="ChEBI" id="CHEBI:13193"/>
        <dbReference type="ChEBI" id="CHEBI:15378"/>
        <dbReference type="ChEBI" id="CHEBI:17499"/>
        <dbReference type="ChEBI" id="CHEBI:29950"/>
        <dbReference type="ChEBI" id="CHEBI:30616"/>
        <dbReference type="ChEBI" id="CHEBI:33019"/>
        <dbReference type="ChEBI" id="CHEBI:61963"/>
        <dbReference type="ChEBI" id="CHEBI:82748"/>
        <dbReference type="ChEBI" id="CHEBI:141453"/>
        <dbReference type="ChEBI" id="CHEBI:456215"/>
    </reaction>
    <physiologicalReaction direction="left-to-right" evidence="2 4 7">
        <dbReference type="Rhea" id="RHEA:57049"/>
    </physiologicalReaction>
</comment>
<comment type="cofactor">
    <cofactor evidence="4">
        <name>[4Fe-4S] cluster</name>
        <dbReference type="ChEBI" id="CHEBI:49883"/>
    </cofactor>
    <text evidence="4">Binds 1 [4Fe-4S] cluster per subunit. The cluster is chelated by three Cys residues, the fourth Fe has a free coordination site that may bind a sulfur atom transferred from the persulfide of IscS. The [4Fe-4S] cluster is highly sensitive to oxygen and prone to decompose into the [2Fe-2S] form and further degraded forms.</text>
</comment>
<comment type="cofactor">
    <cofactor evidence="8">
        <name>Mg(2+)</name>
        <dbReference type="ChEBI" id="CHEBI:18420"/>
    </cofactor>
</comment>
<comment type="pathway">
    <text evidence="2 3">tRNA modification.</text>
</comment>
<comment type="subunit">
    <text evidence="2 4">Homodimer.</text>
</comment>
<comment type="subcellular location">
    <subcellularLocation>
        <location evidence="2 6">Cytoplasm</location>
    </subcellularLocation>
</comment>
<comment type="disruption phenotype">
    <text evidence="3">Loss of cytidine thiolation in position 32 in tRNA.</text>
</comment>
<comment type="miscellaneous">
    <text evidence="8">The thiolation reaction likely consists of two steps: a first activation step by ATP to form an adenylated intermediate of the target base of tRNA, and a second nucleophilic substitution step of the sulfur (S) atom supplied by the hydrosulfide attached to the Fe-S cluster.</text>
</comment>
<comment type="similarity">
    <text evidence="2">Belongs to the TtcA family.</text>
</comment>
<organism>
    <name type="scientific">Escherichia coli (strain K12)</name>
    <dbReference type="NCBI Taxonomy" id="83333"/>
    <lineage>
        <taxon>Bacteria</taxon>
        <taxon>Pseudomonadati</taxon>
        <taxon>Pseudomonadota</taxon>
        <taxon>Gammaproteobacteria</taxon>
        <taxon>Enterobacterales</taxon>
        <taxon>Enterobacteriaceae</taxon>
        <taxon>Escherichia</taxon>
    </lineage>
</organism>
<name>TTCA_ECOLI</name>
<proteinExistence type="evidence at protein level"/>
<keyword id="KW-0004">4Fe-4S</keyword>
<keyword id="KW-0067">ATP-binding</keyword>
<keyword id="KW-0963">Cytoplasm</keyword>
<keyword id="KW-0408">Iron</keyword>
<keyword id="KW-0411">Iron-sulfur</keyword>
<keyword id="KW-0460">Magnesium</keyword>
<keyword id="KW-0479">Metal-binding</keyword>
<keyword id="KW-0547">Nucleotide-binding</keyword>
<keyword id="KW-1185">Reference proteome</keyword>
<keyword id="KW-0694">RNA-binding</keyword>
<keyword id="KW-0808">Transferase</keyword>
<keyword id="KW-0819">tRNA processing</keyword>
<keyword id="KW-0820">tRNA-binding</keyword>
<gene>
    <name evidence="2 5" type="primary">ttcA</name>
    <name type="synonym">ydaO</name>
    <name type="ordered locus">b1344</name>
    <name type="ordered locus">JW1338</name>
</gene>
<reference key="1">
    <citation type="journal article" date="1997" name="Science">
        <title>The complete genome sequence of Escherichia coli K-12.</title>
        <authorList>
            <person name="Blattner F.R."/>
            <person name="Plunkett G. III"/>
            <person name="Bloch C.A."/>
            <person name="Perna N.T."/>
            <person name="Burland V."/>
            <person name="Riley M."/>
            <person name="Collado-Vides J."/>
            <person name="Glasner J.D."/>
            <person name="Rode C.K."/>
            <person name="Mayhew G.F."/>
            <person name="Gregor J."/>
            <person name="Davis N.W."/>
            <person name="Kirkpatrick H.A."/>
            <person name="Goeden M.A."/>
            <person name="Rose D.J."/>
            <person name="Mau B."/>
            <person name="Shao Y."/>
        </authorList>
    </citation>
    <scope>NUCLEOTIDE SEQUENCE [LARGE SCALE GENOMIC DNA]</scope>
    <source>
        <strain>K12 / MG1655 / ATCC 47076</strain>
    </source>
</reference>
<reference key="2">
    <citation type="journal article" date="2006" name="Mol. Syst. Biol.">
        <title>Highly accurate genome sequences of Escherichia coli K-12 strains MG1655 and W3110.</title>
        <authorList>
            <person name="Hayashi K."/>
            <person name="Morooka N."/>
            <person name="Yamamoto Y."/>
            <person name="Fujita K."/>
            <person name="Isono K."/>
            <person name="Choi S."/>
            <person name="Ohtsubo E."/>
            <person name="Baba T."/>
            <person name="Wanner B.L."/>
            <person name="Mori H."/>
            <person name="Horiuchi T."/>
        </authorList>
    </citation>
    <scope>NUCLEOTIDE SEQUENCE [LARGE SCALE GENOMIC DNA]</scope>
    <source>
        <strain>K12 / W3110 / ATCC 27325 / DSM 5911</strain>
    </source>
</reference>
<reference key="3">
    <citation type="journal article" date="1994" name="Biosci. Biotechnol. Biochem.">
        <title>Analysis of products of the Escherichia coli genomic genes and regulation of their expressions: an applicable procedure for genomic analysis of other microorganisms.</title>
        <authorList>
            <person name="Talukder A.A."/>
            <person name="Yanai S."/>
            <person name="Yamada M."/>
        </authorList>
    </citation>
    <scope>NUCLEOTIDE SEQUENCE [GENOMIC DNA] OF 1-40</scope>
    <source>
        <strain>K12 / W3110 / ATCC 27325 / DSM 5911</strain>
    </source>
</reference>
<reference key="4">
    <citation type="journal article" date="2004" name="J. Bacteriol.">
        <title>The conserved Cys-X1-X2-Cys motif present in the TtcA protein is required for the thiolation of cytidine in position 32 of tRNA from Salmonella enterica serovar Typhimurium.</title>
        <authorList>
            <person name="Jaeger G."/>
            <person name="Leipuviene R."/>
            <person name="Pollard M.G."/>
            <person name="Qian Q."/>
            <person name="Bjoerk G.R."/>
        </authorList>
    </citation>
    <scope>FUNCTION</scope>
    <scope>DISRUPTION PHENOTYPE</scope>
    <scope>PATHWAY</scope>
    <source>
        <strain>GRB105</strain>
    </source>
</reference>
<reference key="5">
    <citation type="journal article" date="2006" name="Anal. Biochem.">
        <title>Thermofluor-based high-throughput stability optimization of proteins for structural studies.</title>
        <authorList>
            <person name="Ericsson U.B."/>
            <person name="Hallberg B.M."/>
            <person name="DeTitta G.T."/>
            <person name="Dekker N."/>
            <person name="Nordlund P."/>
        </authorList>
    </citation>
    <scope>CRYSTALLIZATION</scope>
</reference>
<reference key="6">
    <citation type="journal article" date="2014" name="Nucleic Acids Res.">
        <title>TtcA a new tRNA-thioltransferase with an Fe-S cluster.</title>
        <authorList>
            <person name="Bouvier D."/>
            <person name="Labessan N."/>
            <person name="Clemancey M."/>
            <person name="Latour J.M."/>
            <person name="Ravanat J.L."/>
            <person name="Fontecave M."/>
            <person name="Atta M."/>
        </authorList>
    </citation>
    <scope>FUNCTION</scope>
    <scope>CATALYTIC ACTIVITY</scope>
    <scope>COFACTOR</scope>
    <scope>SUBUNIT</scope>
    <scope>MUTAGENESIS OF CYS-45; CYS-122; CYS-125; CYS-191; CYS-210 AND CYS-213</scope>
    <scope>REACTION MECHANISM</scope>
</reference>
<sequence length="311" mass="35561">MQENQQITKKEQYNLNKLQKRLRRNVGEAIADFNMIEEGDRIMVCLSGGKDSYTMLEILRNLQQSAPINFSLVAVNLDQKQPGFPEHVLPEYLEKLGVEYKIVEENTYGIVKEKIPEGKTTCSLCSRLRRGILYRTATELGATKIALGHHRDDILQTLFLNMFYGGKMKGMPPKLMSDDGKHIVIRPLAYCREKDIQRFADAKAFPIIPCNLCGSQPNLQRQVIADMLRDWDKRYPGRIETMFSAMQNVVPSHLCDTNLFDFKGITHGSEVVNGGDLAFDREEIPLQPACWQPEEDENQLDELRLNVVEVK</sequence>
<dbReference type="EC" id="2.8.1.-" evidence="4"/>
<dbReference type="EMBL" id="U00096">
    <property type="protein sequence ID" value="AAC74426.1"/>
    <property type="molecule type" value="Genomic_DNA"/>
</dbReference>
<dbReference type="EMBL" id="AP009048">
    <property type="protein sequence ID" value="BAE76407.1"/>
    <property type="molecule type" value="Genomic_DNA"/>
</dbReference>
<dbReference type="EMBL" id="D21139">
    <property type="protein sequence ID" value="BAA04675.1"/>
    <property type="molecule type" value="Genomic_DNA"/>
</dbReference>
<dbReference type="PIR" id="C64884">
    <property type="entry name" value="C64884"/>
</dbReference>
<dbReference type="RefSeq" id="NP_415860.1">
    <property type="nucleotide sequence ID" value="NC_000913.3"/>
</dbReference>
<dbReference type="RefSeq" id="WP_001157406.1">
    <property type="nucleotide sequence ID" value="NZ_JACEFS010000049.1"/>
</dbReference>
<dbReference type="SMR" id="P76055"/>
<dbReference type="BioGRID" id="4261949">
    <property type="interactions" value="120"/>
</dbReference>
<dbReference type="FunCoup" id="P76055">
    <property type="interactions" value="602"/>
</dbReference>
<dbReference type="IntAct" id="P76055">
    <property type="interactions" value="2"/>
</dbReference>
<dbReference type="STRING" id="511145.b1344"/>
<dbReference type="jPOST" id="P76055"/>
<dbReference type="PaxDb" id="511145-b1344"/>
<dbReference type="EnsemblBacteria" id="AAC74426">
    <property type="protein sequence ID" value="AAC74426"/>
    <property type="gene ID" value="b1344"/>
</dbReference>
<dbReference type="GeneID" id="948967"/>
<dbReference type="KEGG" id="ecj:JW1338"/>
<dbReference type="KEGG" id="eco:b1344"/>
<dbReference type="KEGG" id="ecoc:C3026_07875"/>
<dbReference type="PATRIC" id="fig|1411691.4.peg.932"/>
<dbReference type="EchoBASE" id="EB3140"/>
<dbReference type="eggNOG" id="COG0037">
    <property type="taxonomic scope" value="Bacteria"/>
</dbReference>
<dbReference type="HOGENOM" id="CLU_026481_0_0_6"/>
<dbReference type="InParanoid" id="P76055"/>
<dbReference type="OMA" id="IGHNLDD"/>
<dbReference type="OrthoDB" id="9801054at2"/>
<dbReference type="PhylomeDB" id="P76055"/>
<dbReference type="BioCyc" id="EcoCyc:G6675-MONOMER"/>
<dbReference type="BioCyc" id="MetaCyc:G6675-MONOMER"/>
<dbReference type="PRO" id="PR:P76055"/>
<dbReference type="Proteomes" id="UP000000625">
    <property type="component" value="Chromosome"/>
</dbReference>
<dbReference type="GO" id="GO:0005829">
    <property type="term" value="C:cytosol"/>
    <property type="evidence" value="ECO:0000314"/>
    <property type="project" value="EcoCyc"/>
</dbReference>
<dbReference type="GO" id="GO:0051539">
    <property type="term" value="F:4 iron, 4 sulfur cluster binding"/>
    <property type="evidence" value="ECO:0000314"/>
    <property type="project" value="EcoCyc"/>
</dbReference>
<dbReference type="GO" id="GO:0005524">
    <property type="term" value="F:ATP binding"/>
    <property type="evidence" value="ECO:0007669"/>
    <property type="project" value="UniProtKB-UniRule"/>
</dbReference>
<dbReference type="GO" id="GO:0000287">
    <property type="term" value="F:magnesium ion binding"/>
    <property type="evidence" value="ECO:0007669"/>
    <property type="project" value="UniProtKB-UniRule"/>
</dbReference>
<dbReference type="GO" id="GO:0042803">
    <property type="term" value="F:protein homodimerization activity"/>
    <property type="evidence" value="ECO:0000314"/>
    <property type="project" value="EcoCyc"/>
</dbReference>
<dbReference type="GO" id="GO:0016783">
    <property type="term" value="F:sulfurtransferase activity"/>
    <property type="evidence" value="ECO:0000314"/>
    <property type="project" value="EcoCyc"/>
</dbReference>
<dbReference type="GO" id="GO:0000049">
    <property type="term" value="F:tRNA binding"/>
    <property type="evidence" value="ECO:0007669"/>
    <property type="project" value="UniProtKB-KW"/>
</dbReference>
<dbReference type="GO" id="GO:0006400">
    <property type="term" value="P:tRNA modification"/>
    <property type="evidence" value="ECO:0000315"/>
    <property type="project" value="EcoCyc"/>
</dbReference>
<dbReference type="GO" id="GO:0034227">
    <property type="term" value="P:tRNA thio-modification"/>
    <property type="evidence" value="ECO:0000314"/>
    <property type="project" value="EcoCyc"/>
</dbReference>
<dbReference type="CDD" id="cd24138">
    <property type="entry name" value="TtcA-like"/>
    <property type="match status" value="1"/>
</dbReference>
<dbReference type="FunFam" id="3.40.50.620:FF:000046">
    <property type="entry name" value="tRNA-cytidine(32) 2-sulfurtransferase"/>
    <property type="match status" value="1"/>
</dbReference>
<dbReference type="Gene3D" id="3.40.50.620">
    <property type="entry name" value="HUPs"/>
    <property type="match status" value="1"/>
</dbReference>
<dbReference type="HAMAP" id="MF_01850">
    <property type="entry name" value="TtcA"/>
    <property type="match status" value="1"/>
</dbReference>
<dbReference type="InterPro" id="IPR014729">
    <property type="entry name" value="Rossmann-like_a/b/a_fold"/>
</dbReference>
<dbReference type="InterPro" id="IPR011063">
    <property type="entry name" value="TilS/TtcA_N"/>
</dbReference>
<dbReference type="InterPro" id="IPR012089">
    <property type="entry name" value="tRNA_Cyd_32_2_STrfase"/>
</dbReference>
<dbReference type="InterPro" id="IPR035107">
    <property type="entry name" value="tRNA_thiolation_TtcA_Ctu1"/>
</dbReference>
<dbReference type="NCBIfam" id="NF007972">
    <property type="entry name" value="PRK10696.1"/>
    <property type="match status" value="1"/>
</dbReference>
<dbReference type="PANTHER" id="PTHR43686:SF1">
    <property type="entry name" value="AMINOTRAN_5 DOMAIN-CONTAINING PROTEIN"/>
    <property type="match status" value="1"/>
</dbReference>
<dbReference type="PANTHER" id="PTHR43686">
    <property type="entry name" value="SULFURTRANSFERASE-RELATED"/>
    <property type="match status" value="1"/>
</dbReference>
<dbReference type="Pfam" id="PF01171">
    <property type="entry name" value="ATP_bind_3"/>
    <property type="match status" value="1"/>
</dbReference>
<dbReference type="PIRSF" id="PIRSF004976">
    <property type="entry name" value="ATPase_YdaO"/>
    <property type="match status" value="1"/>
</dbReference>
<dbReference type="SUPFAM" id="SSF52402">
    <property type="entry name" value="Adenine nucleotide alpha hydrolases-like"/>
    <property type="match status" value="1"/>
</dbReference>
<protein>
    <recommendedName>
        <fullName evidence="2">tRNA-cytidine(32) 2-sulfurtransferase</fullName>
        <ecNumber evidence="4">2.8.1.-</ecNumber>
    </recommendedName>
    <alternativeName>
        <fullName evidence="5">Two-thiocytidine biosynthesis protein A</fullName>
    </alternativeName>
    <alternativeName>
        <fullName evidence="2">tRNA 2-thiocytidine biosynthesis protein TtcA</fullName>
    </alternativeName>
</protein>
<feature type="chain" id="PRO_0000168907" description="tRNA-cytidine(32) 2-sulfurtransferase">
    <location>
        <begin position="1"/>
        <end position="311"/>
    </location>
</feature>
<feature type="short sequence motif" description="PP-loop motif" evidence="8">
    <location>
        <begin position="47"/>
        <end position="52"/>
    </location>
</feature>
<feature type="binding site" evidence="1 8">
    <location>
        <position position="122"/>
    </location>
    <ligand>
        <name>[4Fe-4S] cluster</name>
        <dbReference type="ChEBI" id="CHEBI:49883"/>
    </ligand>
</feature>
<feature type="binding site" evidence="1 8">
    <location>
        <position position="125"/>
    </location>
    <ligand>
        <name>[4Fe-4S] cluster</name>
        <dbReference type="ChEBI" id="CHEBI:49883"/>
    </ligand>
</feature>
<feature type="binding site" evidence="1 8">
    <location>
        <position position="213"/>
    </location>
    <ligand>
        <name>[4Fe-4S] cluster</name>
        <dbReference type="ChEBI" id="CHEBI:49883"/>
    </ligand>
</feature>
<feature type="mutagenesis site" description="Able to functionally complement a ttcA deletion mutant as efficiently as wild-type." evidence="4">
    <original>C</original>
    <variation>A</variation>
    <location>
        <position position="45"/>
    </location>
</feature>
<feature type="mutagenesis site" description="Not able to functionally complement a ttcA deletion mutant." evidence="4">
    <original>C</original>
    <variation>A</variation>
    <location>
        <position position="122"/>
    </location>
</feature>
<feature type="mutagenesis site" description="Not able to functionally complement a ttcA deletion mutant." evidence="4">
    <original>C</original>
    <variation>A</variation>
    <location>
        <position position="125"/>
    </location>
</feature>
<feature type="mutagenesis site" description="Able to functionally complement a ttcA deletion mutant as efficiently as wild-type." evidence="4">
    <original>C</original>
    <variation>A</variation>
    <location>
        <position position="191"/>
    </location>
</feature>
<feature type="mutagenesis site" description="Able to functionally complement a ttcA deletion mutant, although less efficiently than wild-type." evidence="4">
    <original>C</original>
    <variation>A</variation>
    <location>
        <position position="210"/>
    </location>
</feature>
<feature type="mutagenesis site" description="Not able to functionally complement a ttcA deletion mutant." evidence="4">
    <original>C</original>
    <variation>A</variation>
    <location>
        <position position="213"/>
    </location>
</feature>
<feature type="sequence conflict" description="In Ref. 3; BAA04675." evidence="6" ref="3">
    <original>E</original>
    <variation>A</variation>
    <location>
        <position position="11"/>
    </location>
</feature>
<evidence type="ECO:0000250" key="1">
    <source>
        <dbReference type="UniProtKB" id="O58038"/>
    </source>
</evidence>
<evidence type="ECO:0000255" key="2">
    <source>
        <dbReference type="HAMAP-Rule" id="MF_01850"/>
    </source>
</evidence>
<evidence type="ECO:0000269" key="3">
    <source>
    </source>
</evidence>
<evidence type="ECO:0000269" key="4">
    <source>
    </source>
</evidence>
<evidence type="ECO:0000303" key="5">
    <source>
    </source>
</evidence>
<evidence type="ECO:0000305" key="6"/>
<evidence type="ECO:0000305" key="7">
    <source>
    </source>
</evidence>
<evidence type="ECO:0000305" key="8">
    <source>
    </source>
</evidence>